<gene>
    <name evidence="1" type="primary">glmU</name>
    <name type="ordered locus">CBU_1947</name>
</gene>
<sequence length="455" mass="49313">MGLSVIILAAGQGKRMASSTPKILHPLGGIPLLERVVNTARLLNPHTIHVVYGNGGSHVREKLNYLPVHWIEQSQPLGTGHAVLQAIPFCQNEDRVLILYGDVPLISPKTLNSLLENTPSNGLGVVVAELPDPTGLGRIIRDDFGNILSIVEHKDAEEHQLKIREINTGIMTTTAMNLKKWLPQLNNNNCQKEYYLTDTVALAVAEGCPVGGVAAQCCEEVQGVNDRWELTKLERYYQRLMAKKLSLAGVTIIDPERFDARGENIEIAPDVVIDVNVILEGNVQLDRNVRIGPNVILKNTTVGENTEIHANSVIEAAVIKANCSVGPFARLRPGSVLEEGAKVGNFVEMKKTTLGRGSKANHLTYLGDTIIGKNVNVGAGTITCNYDGANKWQTKIEDGAFIGSNVALVAPLTVGKNATIGAGSTLSQDAPPDQLTVARERQRTIKGWHRPTKKE</sequence>
<reference key="1">
    <citation type="journal article" date="2003" name="Proc. Natl. Acad. Sci. U.S.A.">
        <title>Complete genome sequence of the Q-fever pathogen, Coxiella burnetii.</title>
        <authorList>
            <person name="Seshadri R."/>
            <person name="Paulsen I.T."/>
            <person name="Eisen J.A."/>
            <person name="Read T.D."/>
            <person name="Nelson K.E."/>
            <person name="Nelson W.C."/>
            <person name="Ward N.L."/>
            <person name="Tettelin H."/>
            <person name="Davidsen T.M."/>
            <person name="Beanan M.J."/>
            <person name="DeBoy R.T."/>
            <person name="Daugherty S.C."/>
            <person name="Brinkac L.M."/>
            <person name="Madupu R."/>
            <person name="Dodson R.J."/>
            <person name="Khouri H.M."/>
            <person name="Lee K.H."/>
            <person name="Carty H.A."/>
            <person name="Scanlan D."/>
            <person name="Heinzen R.A."/>
            <person name="Thompson H.A."/>
            <person name="Samuel J.E."/>
            <person name="Fraser C.M."/>
            <person name="Heidelberg J.F."/>
        </authorList>
    </citation>
    <scope>NUCLEOTIDE SEQUENCE [LARGE SCALE GENOMIC DNA]</scope>
    <source>
        <strain>RSA 493 / Nine Mile phase I</strain>
    </source>
</reference>
<comment type="function">
    <text evidence="1">Catalyzes the last two sequential reactions in the de novo biosynthetic pathway for UDP-N-acetylglucosamine (UDP-GlcNAc). The C-terminal domain catalyzes the transfer of acetyl group from acetyl coenzyme A to glucosamine-1-phosphate (GlcN-1-P) to produce N-acetylglucosamine-1-phosphate (GlcNAc-1-P), which is converted into UDP-GlcNAc by the transfer of uridine 5-monophosphate (from uridine 5-triphosphate), a reaction catalyzed by the N-terminal domain.</text>
</comment>
<comment type="catalytic activity">
    <reaction evidence="1">
        <text>alpha-D-glucosamine 1-phosphate + acetyl-CoA = N-acetyl-alpha-D-glucosamine 1-phosphate + CoA + H(+)</text>
        <dbReference type="Rhea" id="RHEA:13725"/>
        <dbReference type="ChEBI" id="CHEBI:15378"/>
        <dbReference type="ChEBI" id="CHEBI:57287"/>
        <dbReference type="ChEBI" id="CHEBI:57288"/>
        <dbReference type="ChEBI" id="CHEBI:57776"/>
        <dbReference type="ChEBI" id="CHEBI:58516"/>
        <dbReference type="EC" id="2.3.1.157"/>
    </reaction>
</comment>
<comment type="catalytic activity">
    <reaction evidence="1">
        <text>N-acetyl-alpha-D-glucosamine 1-phosphate + UTP + H(+) = UDP-N-acetyl-alpha-D-glucosamine + diphosphate</text>
        <dbReference type="Rhea" id="RHEA:13509"/>
        <dbReference type="ChEBI" id="CHEBI:15378"/>
        <dbReference type="ChEBI" id="CHEBI:33019"/>
        <dbReference type="ChEBI" id="CHEBI:46398"/>
        <dbReference type="ChEBI" id="CHEBI:57705"/>
        <dbReference type="ChEBI" id="CHEBI:57776"/>
        <dbReference type="EC" id="2.7.7.23"/>
    </reaction>
</comment>
<comment type="cofactor">
    <cofactor evidence="1">
        <name>Mg(2+)</name>
        <dbReference type="ChEBI" id="CHEBI:18420"/>
    </cofactor>
    <text evidence="1">Binds 1 Mg(2+) ion per subunit.</text>
</comment>
<comment type="pathway">
    <text evidence="1">Nucleotide-sugar biosynthesis; UDP-N-acetyl-alpha-D-glucosamine biosynthesis; N-acetyl-alpha-D-glucosamine 1-phosphate from alpha-D-glucosamine 6-phosphate (route II): step 2/2.</text>
</comment>
<comment type="pathway">
    <text evidence="1">Nucleotide-sugar biosynthesis; UDP-N-acetyl-alpha-D-glucosamine biosynthesis; UDP-N-acetyl-alpha-D-glucosamine from N-acetyl-alpha-D-glucosamine 1-phosphate: step 1/1.</text>
</comment>
<comment type="pathway">
    <text evidence="1">Bacterial outer membrane biogenesis; LPS lipid A biosynthesis.</text>
</comment>
<comment type="subunit">
    <text evidence="1">Homotrimer.</text>
</comment>
<comment type="subcellular location">
    <subcellularLocation>
        <location evidence="1">Cytoplasm</location>
    </subcellularLocation>
</comment>
<comment type="similarity">
    <text evidence="1">In the N-terminal section; belongs to the N-acetylglucosamine-1-phosphate uridyltransferase family.</text>
</comment>
<comment type="similarity">
    <text evidence="1">In the C-terminal section; belongs to the transferase hexapeptide repeat family.</text>
</comment>
<feature type="chain" id="PRO_0000233764" description="Bifunctional protein GlmU">
    <location>
        <begin position="1"/>
        <end position="455"/>
    </location>
</feature>
<feature type="region of interest" description="Pyrophosphorylase" evidence="1">
    <location>
        <begin position="1"/>
        <end position="227"/>
    </location>
</feature>
<feature type="region of interest" description="Linker" evidence="1">
    <location>
        <begin position="228"/>
        <end position="248"/>
    </location>
</feature>
<feature type="region of interest" description="N-acetyltransferase" evidence="1">
    <location>
        <begin position="249"/>
        <end position="455"/>
    </location>
</feature>
<feature type="active site" description="Proton acceptor" evidence="1">
    <location>
        <position position="362"/>
    </location>
</feature>
<feature type="binding site" evidence="1">
    <location>
        <begin position="8"/>
        <end position="11"/>
    </location>
    <ligand>
        <name>UDP-N-acetyl-alpha-D-glucosamine</name>
        <dbReference type="ChEBI" id="CHEBI:57705"/>
    </ligand>
</feature>
<feature type="binding site" evidence="1">
    <location>
        <position position="22"/>
    </location>
    <ligand>
        <name>UDP-N-acetyl-alpha-D-glucosamine</name>
        <dbReference type="ChEBI" id="CHEBI:57705"/>
    </ligand>
</feature>
<feature type="binding site" evidence="1">
    <location>
        <position position="73"/>
    </location>
    <ligand>
        <name>UDP-N-acetyl-alpha-D-glucosamine</name>
        <dbReference type="ChEBI" id="CHEBI:57705"/>
    </ligand>
</feature>
<feature type="binding site" evidence="1">
    <location>
        <begin position="78"/>
        <end position="79"/>
    </location>
    <ligand>
        <name>UDP-N-acetyl-alpha-D-glucosamine</name>
        <dbReference type="ChEBI" id="CHEBI:57705"/>
    </ligand>
</feature>
<feature type="binding site" evidence="1">
    <location>
        <begin position="100"/>
        <end position="102"/>
    </location>
    <ligand>
        <name>UDP-N-acetyl-alpha-D-glucosamine</name>
        <dbReference type="ChEBI" id="CHEBI:57705"/>
    </ligand>
</feature>
<feature type="binding site" evidence="1">
    <location>
        <position position="102"/>
    </location>
    <ligand>
        <name>Mg(2+)</name>
        <dbReference type="ChEBI" id="CHEBI:18420"/>
    </ligand>
</feature>
<feature type="binding site" evidence="1">
    <location>
        <position position="137"/>
    </location>
    <ligand>
        <name>UDP-N-acetyl-alpha-D-glucosamine</name>
        <dbReference type="ChEBI" id="CHEBI:57705"/>
    </ligand>
</feature>
<feature type="binding site" evidence="1">
    <location>
        <position position="152"/>
    </location>
    <ligand>
        <name>UDP-N-acetyl-alpha-D-glucosamine</name>
        <dbReference type="ChEBI" id="CHEBI:57705"/>
    </ligand>
</feature>
<feature type="binding site" evidence="1">
    <location>
        <position position="167"/>
    </location>
    <ligand>
        <name>UDP-N-acetyl-alpha-D-glucosamine</name>
        <dbReference type="ChEBI" id="CHEBI:57705"/>
    </ligand>
</feature>
<feature type="binding site" evidence="1">
    <location>
        <position position="225"/>
    </location>
    <ligand>
        <name>Mg(2+)</name>
        <dbReference type="ChEBI" id="CHEBI:18420"/>
    </ligand>
</feature>
<feature type="binding site" evidence="1">
    <location>
        <position position="225"/>
    </location>
    <ligand>
        <name>UDP-N-acetyl-alpha-D-glucosamine</name>
        <dbReference type="ChEBI" id="CHEBI:57705"/>
    </ligand>
</feature>
<feature type="binding site" evidence="1">
    <location>
        <position position="332"/>
    </location>
    <ligand>
        <name>UDP-N-acetyl-alpha-D-glucosamine</name>
        <dbReference type="ChEBI" id="CHEBI:57705"/>
    </ligand>
</feature>
<feature type="binding site" evidence="1">
    <location>
        <position position="350"/>
    </location>
    <ligand>
        <name>UDP-N-acetyl-alpha-D-glucosamine</name>
        <dbReference type="ChEBI" id="CHEBI:57705"/>
    </ligand>
</feature>
<feature type="binding site" evidence="1">
    <location>
        <position position="365"/>
    </location>
    <ligand>
        <name>UDP-N-acetyl-alpha-D-glucosamine</name>
        <dbReference type="ChEBI" id="CHEBI:57705"/>
    </ligand>
</feature>
<feature type="binding site" evidence="1">
    <location>
        <position position="376"/>
    </location>
    <ligand>
        <name>UDP-N-acetyl-alpha-D-glucosamine</name>
        <dbReference type="ChEBI" id="CHEBI:57705"/>
    </ligand>
</feature>
<feature type="binding site" evidence="1">
    <location>
        <position position="379"/>
    </location>
    <ligand>
        <name>acetyl-CoA</name>
        <dbReference type="ChEBI" id="CHEBI:57288"/>
    </ligand>
</feature>
<feature type="binding site" evidence="1">
    <location>
        <begin position="385"/>
        <end position="386"/>
    </location>
    <ligand>
        <name>acetyl-CoA</name>
        <dbReference type="ChEBI" id="CHEBI:57288"/>
    </ligand>
</feature>
<feature type="binding site" evidence="1">
    <location>
        <position position="404"/>
    </location>
    <ligand>
        <name>acetyl-CoA</name>
        <dbReference type="ChEBI" id="CHEBI:57288"/>
    </ligand>
</feature>
<feature type="binding site" evidence="1">
    <location>
        <position position="422"/>
    </location>
    <ligand>
        <name>acetyl-CoA</name>
        <dbReference type="ChEBI" id="CHEBI:57288"/>
    </ligand>
</feature>
<feature type="binding site" evidence="1">
    <location>
        <position position="439"/>
    </location>
    <ligand>
        <name>acetyl-CoA</name>
        <dbReference type="ChEBI" id="CHEBI:57288"/>
    </ligand>
</feature>
<accession>Q83AF3</accession>
<keyword id="KW-0012">Acyltransferase</keyword>
<keyword id="KW-0133">Cell shape</keyword>
<keyword id="KW-0961">Cell wall biogenesis/degradation</keyword>
<keyword id="KW-0963">Cytoplasm</keyword>
<keyword id="KW-0460">Magnesium</keyword>
<keyword id="KW-0479">Metal-binding</keyword>
<keyword id="KW-0511">Multifunctional enzyme</keyword>
<keyword id="KW-0548">Nucleotidyltransferase</keyword>
<keyword id="KW-0573">Peptidoglycan synthesis</keyword>
<keyword id="KW-1185">Reference proteome</keyword>
<keyword id="KW-0677">Repeat</keyword>
<keyword id="KW-0808">Transferase</keyword>
<organism>
    <name type="scientific">Coxiella burnetii (strain RSA 493 / Nine Mile phase I)</name>
    <dbReference type="NCBI Taxonomy" id="227377"/>
    <lineage>
        <taxon>Bacteria</taxon>
        <taxon>Pseudomonadati</taxon>
        <taxon>Pseudomonadota</taxon>
        <taxon>Gammaproteobacteria</taxon>
        <taxon>Legionellales</taxon>
        <taxon>Coxiellaceae</taxon>
        <taxon>Coxiella</taxon>
    </lineage>
</organism>
<evidence type="ECO:0000255" key="1">
    <source>
        <dbReference type="HAMAP-Rule" id="MF_01631"/>
    </source>
</evidence>
<proteinExistence type="inferred from homology"/>
<protein>
    <recommendedName>
        <fullName evidence="1">Bifunctional protein GlmU</fullName>
    </recommendedName>
    <domain>
        <recommendedName>
            <fullName evidence="1">UDP-N-acetylglucosamine pyrophosphorylase</fullName>
            <ecNumber evidence="1">2.7.7.23</ecNumber>
        </recommendedName>
        <alternativeName>
            <fullName evidence="1">N-acetylglucosamine-1-phosphate uridyltransferase</fullName>
        </alternativeName>
    </domain>
    <domain>
        <recommendedName>
            <fullName evidence="1">Glucosamine-1-phosphate N-acetyltransferase</fullName>
            <ecNumber evidence="1">2.3.1.157</ecNumber>
        </recommendedName>
    </domain>
</protein>
<dbReference type="EC" id="2.7.7.23" evidence="1"/>
<dbReference type="EC" id="2.3.1.157" evidence="1"/>
<dbReference type="EMBL" id="AE016828">
    <property type="protein sequence ID" value="AAO91437.1"/>
    <property type="molecule type" value="Genomic_DNA"/>
</dbReference>
<dbReference type="RefSeq" id="NP_820923.1">
    <property type="nucleotide sequence ID" value="NC_002971.4"/>
</dbReference>
<dbReference type="RefSeq" id="WP_010958558.1">
    <property type="nucleotide sequence ID" value="NC_002971.4"/>
</dbReference>
<dbReference type="SMR" id="Q83AF3"/>
<dbReference type="STRING" id="227377.CBU_1947"/>
<dbReference type="EnsemblBacteria" id="AAO91437">
    <property type="protein sequence ID" value="AAO91437"/>
    <property type="gene ID" value="CBU_1947"/>
</dbReference>
<dbReference type="GeneID" id="1209860"/>
<dbReference type="KEGG" id="cbu:CBU_1947"/>
<dbReference type="PATRIC" id="fig|227377.7.peg.1933"/>
<dbReference type="eggNOG" id="COG1207">
    <property type="taxonomic scope" value="Bacteria"/>
</dbReference>
<dbReference type="HOGENOM" id="CLU_029499_15_2_6"/>
<dbReference type="OrthoDB" id="9775031at2"/>
<dbReference type="UniPathway" id="UPA00113">
    <property type="reaction ID" value="UER00532"/>
</dbReference>
<dbReference type="UniPathway" id="UPA00113">
    <property type="reaction ID" value="UER00533"/>
</dbReference>
<dbReference type="UniPathway" id="UPA00973"/>
<dbReference type="Proteomes" id="UP000002671">
    <property type="component" value="Chromosome"/>
</dbReference>
<dbReference type="GO" id="GO:0005737">
    <property type="term" value="C:cytoplasm"/>
    <property type="evidence" value="ECO:0007669"/>
    <property type="project" value="UniProtKB-SubCell"/>
</dbReference>
<dbReference type="GO" id="GO:0016020">
    <property type="term" value="C:membrane"/>
    <property type="evidence" value="ECO:0007669"/>
    <property type="project" value="GOC"/>
</dbReference>
<dbReference type="GO" id="GO:0019134">
    <property type="term" value="F:glucosamine-1-phosphate N-acetyltransferase activity"/>
    <property type="evidence" value="ECO:0007669"/>
    <property type="project" value="UniProtKB-UniRule"/>
</dbReference>
<dbReference type="GO" id="GO:0000287">
    <property type="term" value="F:magnesium ion binding"/>
    <property type="evidence" value="ECO:0007669"/>
    <property type="project" value="UniProtKB-UniRule"/>
</dbReference>
<dbReference type="GO" id="GO:0003977">
    <property type="term" value="F:UDP-N-acetylglucosamine diphosphorylase activity"/>
    <property type="evidence" value="ECO:0007669"/>
    <property type="project" value="UniProtKB-UniRule"/>
</dbReference>
<dbReference type="GO" id="GO:0000902">
    <property type="term" value="P:cell morphogenesis"/>
    <property type="evidence" value="ECO:0007669"/>
    <property type="project" value="UniProtKB-UniRule"/>
</dbReference>
<dbReference type="GO" id="GO:0071555">
    <property type="term" value="P:cell wall organization"/>
    <property type="evidence" value="ECO:0007669"/>
    <property type="project" value="UniProtKB-KW"/>
</dbReference>
<dbReference type="GO" id="GO:0009245">
    <property type="term" value="P:lipid A biosynthetic process"/>
    <property type="evidence" value="ECO:0007669"/>
    <property type="project" value="UniProtKB-UniRule"/>
</dbReference>
<dbReference type="GO" id="GO:0009252">
    <property type="term" value="P:peptidoglycan biosynthetic process"/>
    <property type="evidence" value="ECO:0007669"/>
    <property type="project" value="UniProtKB-UniRule"/>
</dbReference>
<dbReference type="GO" id="GO:0008360">
    <property type="term" value="P:regulation of cell shape"/>
    <property type="evidence" value="ECO:0007669"/>
    <property type="project" value="UniProtKB-KW"/>
</dbReference>
<dbReference type="GO" id="GO:0006048">
    <property type="term" value="P:UDP-N-acetylglucosamine biosynthetic process"/>
    <property type="evidence" value="ECO:0007669"/>
    <property type="project" value="UniProtKB-UniPathway"/>
</dbReference>
<dbReference type="CDD" id="cd02540">
    <property type="entry name" value="GT2_GlmU_N_bac"/>
    <property type="match status" value="1"/>
</dbReference>
<dbReference type="CDD" id="cd03353">
    <property type="entry name" value="LbH_GlmU_C"/>
    <property type="match status" value="1"/>
</dbReference>
<dbReference type="Gene3D" id="2.160.10.10">
    <property type="entry name" value="Hexapeptide repeat proteins"/>
    <property type="match status" value="1"/>
</dbReference>
<dbReference type="Gene3D" id="3.90.550.10">
    <property type="entry name" value="Spore Coat Polysaccharide Biosynthesis Protein SpsA, Chain A"/>
    <property type="match status" value="1"/>
</dbReference>
<dbReference type="HAMAP" id="MF_01631">
    <property type="entry name" value="GlmU"/>
    <property type="match status" value="1"/>
</dbReference>
<dbReference type="InterPro" id="IPR005882">
    <property type="entry name" value="Bifunctional_GlmU"/>
</dbReference>
<dbReference type="InterPro" id="IPR050065">
    <property type="entry name" value="GlmU-like"/>
</dbReference>
<dbReference type="InterPro" id="IPR038009">
    <property type="entry name" value="GlmU_C_LbH"/>
</dbReference>
<dbReference type="InterPro" id="IPR001451">
    <property type="entry name" value="Hexapep"/>
</dbReference>
<dbReference type="InterPro" id="IPR018357">
    <property type="entry name" value="Hexapep_transf_CS"/>
</dbReference>
<dbReference type="InterPro" id="IPR025877">
    <property type="entry name" value="MobA-like_NTP_Trfase"/>
</dbReference>
<dbReference type="InterPro" id="IPR029044">
    <property type="entry name" value="Nucleotide-diphossugar_trans"/>
</dbReference>
<dbReference type="InterPro" id="IPR011004">
    <property type="entry name" value="Trimer_LpxA-like_sf"/>
</dbReference>
<dbReference type="NCBIfam" id="TIGR01173">
    <property type="entry name" value="glmU"/>
    <property type="match status" value="1"/>
</dbReference>
<dbReference type="PANTHER" id="PTHR43584:SF3">
    <property type="entry name" value="BIFUNCTIONAL PROTEIN GLMU"/>
    <property type="match status" value="1"/>
</dbReference>
<dbReference type="PANTHER" id="PTHR43584">
    <property type="entry name" value="NUCLEOTIDYL TRANSFERASE"/>
    <property type="match status" value="1"/>
</dbReference>
<dbReference type="Pfam" id="PF00132">
    <property type="entry name" value="Hexapep"/>
    <property type="match status" value="1"/>
</dbReference>
<dbReference type="Pfam" id="PF12804">
    <property type="entry name" value="NTP_transf_3"/>
    <property type="match status" value="1"/>
</dbReference>
<dbReference type="SUPFAM" id="SSF53448">
    <property type="entry name" value="Nucleotide-diphospho-sugar transferases"/>
    <property type="match status" value="1"/>
</dbReference>
<dbReference type="SUPFAM" id="SSF51161">
    <property type="entry name" value="Trimeric LpxA-like enzymes"/>
    <property type="match status" value="1"/>
</dbReference>
<dbReference type="PROSITE" id="PS00101">
    <property type="entry name" value="HEXAPEP_TRANSFERASES"/>
    <property type="match status" value="1"/>
</dbReference>
<name>GLMU_COXBU</name>